<accession>Q3AQL9</accession>
<sequence>MYLHLLKSKIHNAIVTSGDLEYEGSITIDSELLDLAGMIPNEKVLVVNNNNGERFETYIIKGDHGSREIQLNGAAARCALPGDEIIIMTFAVMEEAEARNYKPMVLIVDRHNNPKSRHLVGEQSEPLSN</sequence>
<name>PAND_CHLCH</name>
<protein>
    <recommendedName>
        <fullName evidence="1">Aspartate 1-decarboxylase</fullName>
        <ecNumber evidence="1">4.1.1.11</ecNumber>
    </recommendedName>
    <alternativeName>
        <fullName evidence="1">Aspartate alpha-decarboxylase</fullName>
    </alternativeName>
    <component>
        <recommendedName>
            <fullName evidence="1">Aspartate 1-decarboxylase beta chain</fullName>
        </recommendedName>
    </component>
    <component>
        <recommendedName>
            <fullName evidence="1">Aspartate 1-decarboxylase alpha chain</fullName>
        </recommendedName>
    </component>
</protein>
<keyword id="KW-0068">Autocatalytic cleavage</keyword>
<keyword id="KW-0963">Cytoplasm</keyword>
<keyword id="KW-0210">Decarboxylase</keyword>
<keyword id="KW-0456">Lyase</keyword>
<keyword id="KW-0566">Pantothenate biosynthesis</keyword>
<keyword id="KW-0670">Pyruvate</keyword>
<keyword id="KW-0704">Schiff base</keyword>
<keyword id="KW-0865">Zymogen</keyword>
<reference key="1">
    <citation type="submission" date="2005-08" db="EMBL/GenBank/DDBJ databases">
        <title>Complete sequence of Chlorobium chlorochromatii CaD3.</title>
        <authorList>
            <consortium name="US DOE Joint Genome Institute"/>
            <person name="Copeland A."/>
            <person name="Lucas S."/>
            <person name="Lapidus A."/>
            <person name="Barry K."/>
            <person name="Detter J.C."/>
            <person name="Glavina T."/>
            <person name="Hammon N."/>
            <person name="Israni S."/>
            <person name="Pitluck S."/>
            <person name="Bryant D."/>
            <person name="Schmutz J."/>
            <person name="Larimer F."/>
            <person name="Land M."/>
            <person name="Kyrpides N."/>
            <person name="Ivanova N."/>
            <person name="Richardson P."/>
        </authorList>
    </citation>
    <scope>NUCLEOTIDE SEQUENCE [LARGE SCALE GENOMIC DNA]</scope>
    <source>
        <strain>CaD3</strain>
    </source>
</reference>
<evidence type="ECO:0000255" key="1">
    <source>
        <dbReference type="HAMAP-Rule" id="MF_00446"/>
    </source>
</evidence>
<organism>
    <name type="scientific">Chlorobium chlorochromatii (strain CaD3)</name>
    <dbReference type="NCBI Taxonomy" id="340177"/>
    <lineage>
        <taxon>Bacteria</taxon>
        <taxon>Pseudomonadati</taxon>
        <taxon>Chlorobiota</taxon>
        <taxon>Chlorobiia</taxon>
        <taxon>Chlorobiales</taxon>
        <taxon>Chlorobiaceae</taxon>
        <taxon>Chlorobium/Pelodictyon group</taxon>
        <taxon>Chlorobium</taxon>
    </lineage>
</organism>
<comment type="function">
    <text evidence="1">Catalyzes the pyruvoyl-dependent decarboxylation of aspartate to produce beta-alanine.</text>
</comment>
<comment type="catalytic activity">
    <reaction evidence="1">
        <text>L-aspartate + H(+) = beta-alanine + CO2</text>
        <dbReference type="Rhea" id="RHEA:19497"/>
        <dbReference type="ChEBI" id="CHEBI:15378"/>
        <dbReference type="ChEBI" id="CHEBI:16526"/>
        <dbReference type="ChEBI" id="CHEBI:29991"/>
        <dbReference type="ChEBI" id="CHEBI:57966"/>
        <dbReference type="EC" id="4.1.1.11"/>
    </reaction>
</comment>
<comment type="cofactor">
    <cofactor evidence="1">
        <name>pyruvate</name>
        <dbReference type="ChEBI" id="CHEBI:15361"/>
    </cofactor>
    <text evidence="1">Binds 1 pyruvoyl group covalently per subunit.</text>
</comment>
<comment type="pathway">
    <text evidence="1">Cofactor biosynthesis; (R)-pantothenate biosynthesis; beta-alanine from L-aspartate: step 1/1.</text>
</comment>
<comment type="subunit">
    <text evidence="1">Heterooctamer of four alpha and four beta subunits.</text>
</comment>
<comment type="subcellular location">
    <subcellularLocation>
        <location evidence="1">Cytoplasm</location>
    </subcellularLocation>
</comment>
<comment type="PTM">
    <text evidence="1">Is synthesized initially as an inactive proenzyme, which is activated by self-cleavage at a specific serine bond to produce a beta-subunit with a hydroxyl group at its C-terminus and an alpha-subunit with a pyruvoyl group at its N-terminus.</text>
</comment>
<comment type="similarity">
    <text evidence="1">Belongs to the PanD family.</text>
</comment>
<proteinExistence type="inferred from homology"/>
<dbReference type="EC" id="4.1.1.11" evidence="1"/>
<dbReference type="EMBL" id="CP000108">
    <property type="protein sequence ID" value="ABB28706.1"/>
    <property type="molecule type" value="Genomic_DNA"/>
</dbReference>
<dbReference type="SMR" id="Q3AQL9"/>
<dbReference type="STRING" id="340177.Cag_1450"/>
<dbReference type="KEGG" id="cch:Cag_1450"/>
<dbReference type="eggNOG" id="COG0853">
    <property type="taxonomic scope" value="Bacteria"/>
</dbReference>
<dbReference type="HOGENOM" id="CLU_115305_2_0_10"/>
<dbReference type="OrthoDB" id="9803983at2"/>
<dbReference type="UniPathway" id="UPA00028">
    <property type="reaction ID" value="UER00002"/>
</dbReference>
<dbReference type="GO" id="GO:0005829">
    <property type="term" value="C:cytosol"/>
    <property type="evidence" value="ECO:0007669"/>
    <property type="project" value="TreeGrafter"/>
</dbReference>
<dbReference type="GO" id="GO:0004068">
    <property type="term" value="F:aspartate 1-decarboxylase activity"/>
    <property type="evidence" value="ECO:0007669"/>
    <property type="project" value="UniProtKB-UniRule"/>
</dbReference>
<dbReference type="GO" id="GO:0006523">
    <property type="term" value="P:alanine biosynthetic process"/>
    <property type="evidence" value="ECO:0007669"/>
    <property type="project" value="InterPro"/>
</dbReference>
<dbReference type="GO" id="GO:0015940">
    <property type="term" value="P:pantothenate biosynthetic process"/>
    <property type="evidence" value="ECO:0007669"/>
    <property type="project" value="UniProtKB-UniRule"/>
</dbReference>
<dbReference type="CDD" id="cd06919">
    <property type="entry name" value="Asp_decarbox"/>
    <property type="match status" value="1"/>
</dbReference>
<dbReference type="Gene3D" id="2.40.40.20">
    <property type="match status" value="1"/>
</dbReference>
<dbReference type="HAMAP" id="MF_00446">
    <property type="entry name" value="PanD"/>
    <property type="match status" value="1"/>
</dbReference>
<dbReference type="InterPro" id="IPR009010">
    <property type="entry name" value="Asp_de-COase-like_dom_sf"/>
</dbReference>
<dbReference type="InterPro" id="IPR003190">
    <property type="entry name" value="Asp_decarbox"/>
</dbReference>
<dbReference type="NCBIfam" id="TIGR00223">
    <property type="entry name" value="panD"/>
    <property type="match status" value="1"/>
</dbReference>
<dbReference type="PANTHER" id="PTHR21012">
    <property type="entry name" value="ASPARTATE 1-DECARBOXYLASE"/>
    <property type="match status" value="1"/>
</dbReference>
<dbReference type="PANTHER" id="PTHR21012:SF0">
    <property type="entry name" value="ASPARTATE 1-DECARBOXYLASE"/>
    <property type="match status" value="1"/>
</dbReference>
<dbReference type="Pfam" id="PF02261">
    <property type="entry name" value="Asp_decarbox"/>
    <property type="match status" value="1"/>
</dbReference>
<dbReference type="PIRSF" id="PIRSF006246">
    <property type="entry name" value="Asp_decarbox"/>
    <property type="match status" value="1"/>
</dbReference>
<dbReference type="SUPFAM" id="SSF50692">
    <property type="entry name" value="ADC-like"/>
    <property type="match status" value="1"/>
</dbReference>
<gene>
    <name evidence="1" type="primary">panD</name>
    <name type="ordered locus">Cag_1450</name>
</gene>
<feature type="chain" id="PRO_0000236861" description="Aspartate 1-decarboxylase beta chain" evidence="1">
    <location>
        <begin position="1"/>
        <end position="24"/>
    </location>
</feature>
<feature type="chain" id="PRO_0000236862" description="Aspartate 1-decarboxylase alpha chain" evidence="1">
    <location>
        <begin position="25"/>
        <end position="129"/>
    </location>
</feature>
<feature type="active site" description="Schiff-base intermediate with substrate; via pyruvic acid" evidence="1">
    <location>
        <position position="25"/>
    </location>
</feature>
<feature type="active site" description="Proton donor" evidence="1">
    <location>
        <position position="58"/>
    </location>
</feature>
<feature type="binding site" evidence="1">
    <location>
        <position position="57"/>
    </location>
    <ligand>
        <name>substrate</name>
    </ligand>
</feature>
<feature type="binding site" evidence="1">
    <location>
        <begin position="73"/>
        <end position="75"/>
    </location>
    <ligand>
        <name>substrate</name>
    </ligand>
</feature>
<feature type="modified residue" description="Pyruvic acid (Ser)" evidence="1">
    <location>
        <position position="25"/>
    </location>
</feature>